<gene>
    <name evidence="1" type="primary">rsmA</name>
    <name evidence="1" type="synonym">ksgA</name>
    <name type="ordered locus">ECIAI1_0053</name>
</gene>
<comment type="function">
    <text evidence="1">Specifically dimethylates two adjacent adenosines (A1518 and A1519) in the loop of a conserved hairpin near the 3'-end of 16S rRNA in the 30S particle. May play a critical role in biogenesis of 30S subunits.</text>
</comment>
<comment type="catalytic activity">
    <reaction evidence="1">
        <text>adenosine(1518)/adenosine(1519) in 16S rRNA + 4 S-adenosyl-L-methionine = N(6)-dimethyladenosine(1518)/N(6)-dimethyladenosine(1519) in 16S rRNA + 4 S-adenosyl-L-homocysteine + 4 H(+)</text>
        <dbReference type="Rhea" id="RHEA:19609"/>
        <dbReference type="Rhea" id="RHEA-COMP:10232"/>
        <dbReference type="Rhea" id="RHEA-COMP:10233"/>
        <dbReference type="ChEBI" id="CHEBI:15378"/>
        <dbReference type="ChEBI" id="CHEBI:57856"/>
        <dbReference type="ChEBI" id="CHEBI:59789"/>
        <dbReference type="ChEBI" id="CHEBI:74411"/>
        <dbReference type="ChEBI" id="CHEBI:74493"/>
        <dbReference type="EC" id="2.1.1.182"/>
    </reaction>
</comment>
<comment type="subcellular location">
    <subcellularLocation>
        <location evidence="1">Cytoplasm</location>
    </subcellularLocation>
</comment>
<comment type="similarity">
    <text evidence="1">Belongs to the class I-like SAM-binding methyltransferase superfamily. rRNA adenine N(6)-methyltransferase family. RsmA subfamily.</text>
</comment>
<evidence type="ECO:0000255" key="1">
    <source>
        <dbReference type="HAMAP-Rule" id="MF_00607"/>
    </source>
</evidence>
<dbReference type="EC" id="2.1.1.182" evidence="1"/>
<dbReference type="EMBL" id="CU928160">
    <property type="protein sequence ID" value="CAQ96943.1"/>
    <property type="molecule type" value="Genomic_DNA"/>
</dbReference>
<dbReference type="RefSeq" id="WP_001065381.1">
    <property type="nucleotide sequence ID" value="NC_011741.1"/>
</dbReference>
<dbReference type="SMR" id="B7M0E8"/>
<dbReference type="GeneID" id="93777384"/>
<dbReference type="KEGG" id="ecr:ECIAI1_0053"/>
<dbReference type="HOGENOM" id="CLU_041220_0_1_6"/>
<dbReference type="GO" id="GO:0005829">
    <property type="term" value="C:cytosol"/>
    <property type="evidence" value="ECO:0007669"/>
    <property type="project" value="TreeGrafter"/>
</dbReference>
<dbReference type="GO" id="GO:0052908">
    <property type="term" value="F:16S rRNA (adenine(1518)-N(6)/adenine(1519)-N(6))-dimethyltransferase activity"/>
    <property type="evidence" value="ECO:0007669"/>
    <property type="project" value="UniProtKB-EC"/>
</dbReference>
<dbReference type="GO" id="GO:0003723">
    <property type="term" value="F:RNA binding"/>
    <property type="evidence" value="ECO:0007669"/>
    <property type="project" value="UniProtKB-KW"/>
</dbReference>
<dbReference type="FunFam" id="1.10.8.100:FF:000001">
    <property type="entry name" value="Ribosomal RNA small subunit methyltransferase A"/>
    <property type="match status" value="1"/>
</dbReference>
<dbReference type="FunFam" id="3.40.50.150:FF:000006">
    <property type="entry name" value="Ribosomal RNA small subunit methyltransferase A"/>
    <property type="match status" value="1"/>
</dbReference>
<dbReference type="Gene3D" id="1.10.8.100">
    <property type="entry name" value="Ribosomal RNA adenine dimethylase-like, domain 2"/>
    <property type="match status" value="1"/>
</dbReference>
<dbReference type="Gene3D" id="3.40.50.150">
    <property type="entry name" value="Vaccinia Virus protein VP39"/>
    <property type="match status" value="1"/>
</dbReference>
<dbReference type="HAMAP" id="MF_00607">
    <property type="entry name" value="16SrRNA_methyltr_A"/>
    <property type="match status" value="1"/>
</dbReference>
<dbReference type="InterPro" id="IPR001737">
    <property type="entry name" value="KsgA/Erm"/>
</dbReference>
<dbReference type="InterPro" id="IPR023165">
    <property type="entry name" value="rRNA_Ade_diMease-like_C"/>
</dbReference>
<dbReference type="InterPro" id="IPR020596">
    <property type="entry name" value="rRNA_Ade_Mease_Trfase_CS"/>
</dbReference>
<dbReference type="InterPro" id="IPR020598">
    <property type="entry name" value="rRNA_Ade_methylase_Trfase_N"/>
</dbReference>
<dbReference type="InterPro" id="IPR011530">
    <property type="entry name" value="rRNA_adenine_dimethylase"/>
</dbReference>
<dbReference type="InterPro" id="IPR029063">
    <property type="entry name" value="SAM-dependent_MTases_sf"/>
</dbReference>
<dbReference type="NCBIfam" id="TIGR00755">
    <property type="entry name" value="ksgA"/>
    <property type="match status" value="1"/>
</dbReference>
<dbReference type="PANTHER" id="PTHR11727">
    <property type="entry name" value="DIMETHYLADENOSINE TRANSFERASE"/>
    <property type="match status" value="1"/>
</dbReference>
<dbReference type="PANTHER" id="PTHR11727:SF7">
    <property type="entry name" value="DIMETHYLADENOSINE TRANSFERASE-RELATED"/>
    <property type="match status" value="1"/>
</dbReference>
<dbReference type="Pfam" id="PF00398">
    <property type="entry name" value="RrnaAD"/>
    <property type="match status" value="1"/>
</dbReference>
<dbReference type="SMART" id="SM00650">
    <property type="entry name" value="rADc"/>
    <property type="match status" value="1"/>
</dbReference>
<dbReference type="SUPFAM" id="SSF53335">
    <property type="entry name" value="S-adenosyl-L-methionine-dependent methyltransferases"/>
    <property type="match status" value="1"/>
</dbReference>
<dbReference type="PROSITE" id="PS01131">
    <property type="entry name" value="RRNA_A_DIMETH"/>
    <property type="match status" value="1"/>
</dbReference>
<dbReference type="PROSITE" id="PS51689">
    <property type="entry name" value="SAM_RNA_A_N6_MT"/>
    <property type="match status" value="1"/>
</dbReference>
<name>RSMA_ECO8A</name>
<reference key="1">
    <citation type="journal article" date="2009" name="PLoS Genet.">
        <title>Organised genome dynamics in the Escherichia coli species results in highly diverse adaptive paths.</title>
        <authorList>
            <person name="Touchon M."/>
            <person name="Hoede C."/>
            <person name="Tenaillon O."/>
            <person name="Barbe V."/>
            <person name="Baeriswyl S."/>
            <person name="Bidet P."/>
            <person name="Bingen E."/>
            <person name="Bonacorsi S."/>
            <person name="Bouchier C."/>
            <person name="Bouvet O."/>
            <person name="Calteau A."/>
            <person name="Chiapello H."/>
            <person name="Clermont O."/>
            <person name="Cruveiller S."/>
            <person name="Danchin A."/>
            <person name="Diard M."/>
            <person name="Dossat C."/>
            <person name="Karoui M.E."/>
            <person name="Frapy E."/>
            <person name="Garry L."/>
            <person name="Ghigo J.M."/>
            <person name="Gilles A.M."/>
            <person name="Johnson J."/>
            <person name="Le Bouguenec C."/>
            <person name="Lescat M."/>
            <person name="Mangenot S."/>
            <person name="Martinez-Jehanne V."/>
            <person name="Matic I."/>
            <person name="Nassif X."/>
            <person name="Oztas S."/>
            <person name="Petit M.A."/>
            <person name="Pichon C."/>
            <person name="Rouy Z."/>
            <person name="Ruf C.S."/>
            <person name="Schneider D."/>
            <person name="Tourret J."/>
            <person name="Vacherie B."/>
            <person name="Vallenet D."/>
            <person name="Medigue C."/>
            <person name="Rocha E.P.C."/>
            <person name="Denamur E."/>
        </authorList>
    </citation>
    <scope>NUCLEOTIDE SEQUENCE [LARGE SCALE GENOMIC DNA]</scope>
    <source>
        <strain>IAI1</strain>
    </source>
</reference>
<keyword id="KW-0963">Cytoplasm</keyword>
<keyword id="KW-0489">Methyltransferase</keyword>
<keyword id="KW-0694">RNA-binding</keyword>
<keyword id="KW-0698">rRNA processing</keyword>
<keyword id="KW-0949">S-adenosyl-L-methionine</keyword>
<keyword id="KW-0808">Transferase</keyword>
<accession>B7M0E8</accession>
<protein>
    <recommendedName>
        <fullName evidence="1">Ribosomal RNA small subunit methyltransferase A</fullName>
        <ecNumber evidence="1">2.1.1.182</ecNumber>
    </recommendedName>
    <alternativeName>
        <fullName evidence="1">16S rRNA (adenine(1518)-N(6)/adenine(1519)-N(6))-dimethyltransferase</fullName>
    </alternativeName>
    <alternativeName>
        <fullName evidence="1">16S rRNA dimethyladenosine transferase</fullName>
    </alternativeName>
    <alternativeName>
        <fullName evidence="1">16S rRNA dimethylase</fullName>
    </alternativeName>
    <alternativeName>
        <fullName evidence="1">S-adenosylmethionine-6-N', N'-adenosyl(rRNA) dimethyltransferase</fullName>
    </alternativeName>
</protein>
<sequence>MNNRVHQGHLARKRFGQNFLNDQFVIDSIVSAINPQKGQAMVEIGPGLAALTEPVGERLDQLTVIELDRDLAARLQTHPFLGPKLTIYQQDAMTFNFGELAEKMGQPLRVFGNLPYNISTPLMFHLFSYTDAIADMHFMLQKEVVNRLVAGPNSKAYGRLSVMAQYYCNVIPVLEVPPSAFTPPPKVDSAVVRLVPHATMPHPVKDVRVLSRITTEAFNQRRKTIRNSLGNLFSVEVLTGMGIDPAMRAENISVAQYCQMANYLAENAPLQES</sequence>
<organism>
    <name type="scientific">Escherichia coli O8 (strain IAI1)</name>
    <dbReference type="NCBI Taxonomy" id="585034"/>
    <lineage>
        <taxon>Bacteria</taxon>
        <taxon>Pseudomonadati</taxon>
        <taxon>Pseudomonadota</taxon>
        <taxon>Gammaproteobacteria</taxon>
        <taxon>Enterobacterales</taxon>
        <taxon>Enterobacteriaceae</taxon>
        <taxon>Escherichia</taxon>
    </lineage>
</organism>
<feature type="chain" id="PRO_1000130272" description="Ribosomal RNA small subunit methyltransferase A">
    <location>
        <begin position="1"/>
        <end position="273"/>
    </location>
</feature>
<feature type="binding site" evidence="1">
    <location>
        <position position="18"/>
    </location>
    <ligand>
        <name>S-adenosyl-L-methionine</name>
        <dbReference type="ChEBI" id="CHEBI:59789"/>
    </ligand>
</feature>
<feature type="binding site" evidence="1">
    <location>
        <position position="20"/>
    </location>
    <ligand>
        <name>S-adenosyl-L-methionine</name>
        <dbReference type="ChEBI" id="CHEBI:59789"/>
    </ligand>
</feature>
<feature type="binding site" evidence="1">
    <location>
        <position position="45"/>
    </location>
    <ligand>
        <name>S-adenosyl-L-methionine</name>
        <dbReference type="ChEBI" id="CHEBI:59789"/>
    </ligand>
</feature>
<feature type="binding site" evidence="1">
    <location>
        <position position="66"/>
    </location>
    <ligand>
        <name>S-adenosyl-L-methionine</name>
        <dbReference type="ChEBI" id="CHEBI:59789"/>
    </ligand>
</feature>
<feature type="binding site" evidence="1">
    <location>
        <position position="91"/>
    </location>
    <ligand>
        <name>S-adenosyl-L-methionine</name>
        <dbReference type="ChEBI" id="CHEBI:59789"/>
    </ligand>
</feature>
<feature type="binding site" evidence="1">
    <location>
        <position position="113"/>
    </location>
    <ligand>
        <name>S-adenosyl-L-methionine</name>
        <dbReference type="ChEBI" id="CHEBI:59789"/>
    </ligand>
</feature>
<proteinExistence type="inferred from homology"/>